<sequence>MKNILKVFNTTILALIIIIATFSNSANAADSGTLNYEVYKYNTNDTSIANDYFNKPAKYIKKNGKLYVQITVNHSHWITGMSIEGHKENIISKNTAKDERTSEFEVSKLNGKIDGKIDVYIDEKVNGKPFKYDHHYNITYKFNGPTDVAGANAPGKDDKNSASGSDKGSDGTTTGQSESNSSNKDKVENPQTNAGTPAYIYAIPVASLALLIAITLFVRKKSKGNVE</sequence>
<gene>
    <name type="primary">isdC</name>
    <name type="synonym">sirD</name>
    <name type="ordered locus">SaurJH1_1212</name>
</gene>
<organism>
    <name type="scientific">Staphylococcus aureus (strain JH1)</name>
    <dbReference type="NCBI Taxonomy" id="359787"/>
    <lineage>
        <taxon>Bacteria</taxon>
        <taxon>Bacillati</taxon>
        <taxon>Bacillota</taxon>
        <taxon>Bacilli</taxon>
        <taxon>Bacillales</taxon>
        <taxon>Staphylococcaceae</taxon>
        <taxon>Staphylococcus</taxon>
    </lineage>
</organism>
<protein>
    <recommendedName>
        <fullName>Iron-regulated surface determinant protein C</fullName>
    </recommendedName>
    <alternativeName>
        <fullName>Staphylococcal iron-regulated protein D</fullName>
    </alternativeName>
</protein>
<name>ISDC_STAA2</name>
<proteinExistence type="inferred from homology"/>
<dbReference type="EMBL" id="CP000736">
    <property type="protein sequence ID" value="ABR52066.1"/>
    <property type="molecule type" value="Genomic_DNA"/>
</dbReference>
<dbReference type="BMRB" id="A6U0U8"/>
<dbReference type="SMR" id="A6U0U8"/>
<dbReference type="KEGG" id="sah:SaurJH1_1212"/>
<dbReference type="HOGENOM" id="CLU_092243_1_0_9"/>
<dbReference type="GO" id="GO:0005576">
    <property type="term" value="C:extracellular region"/>
    <property type="evidence" value="ECO:0007669"/>
    <property type="project" value="UniProtKB-KW"/>
</dbReference>
<dbReference type="GO" id="GO:0009274">
    <property type="term" value="C:peptidoglycan-based cell wall"/>
    <property type="evidence" value="ECO:0007669"/>
    <property type="project" value="InterPro"/>
</dbReference>
<dbReference type="GO" id="GO:0030492">
    <property type="term" value="F:hemoglobin binding"/>
    <property type="evidence" value="ECO:0007669"/>
    <property type="project" value="InterPro"/>
</dbReference>
<dbReference type="GO" id="GO:0046872">
    <property type="term" value="F:metal ion binding"/>
    <property type="evidence" value="ECO:0007669"/>
    <property type="project" value="UniProtKB-KW"/>
</dbReference>
<dbReference type="GO" id="GO:0015886">
    <property type="term" value="P:heme transport"/>
    <property type="evidence" value="ECO:0007669"/>
    <property type="project" value="InterPro"/>
</dbReference>
<dbReference type="CDD" id="cd06920">
    <property type="entry name" value="NEAT"/>
    <property type="match status" value="1"/>
</dbReference>
<dbReference type="Gene3D" id="2.60.40.1850">
    <property type="match status" value="1"/>
</dbReference>
<dbReference type="InterPro" id="IPR019909">
    <property type="entry name" value="Haem_uptake_protein_IsdC"/>
</dbReference>
<dbReference type="InterPro" id="IPR050436">
    <property type="entry name" value="IsdA"/>
</dbReference>
<dbReference type="InterPro" id="IPR006635">
    <property type="entry name" value="NEAT_dom"/>
</dbReference>
<dbReference type="InterPro" id="IPR037250">
    <property type="entry name" value="NEAT_dom_sf"/>
</dbReference>
<dbReference type="InterPro" id="IPR017505">
    <property type="entry name" value="Sortase_SrtB_sig_NPQTN"/>
</dbReference>
<dbReference type="NCBIfam" id="TIGR03656">
    <property type="entry name" value="IsdC"/>
    <property type="match status" value="1"/>
</dbReference>
<dbReference type="NCBIfam" id="TIGR03068">
    <property type="entry name" value="srtB_sig_NPQTN"/>
    <property type="match status" value="1"/>
</dbReference>
<dbReference type="PANTHER" id="PTHR37824">
    <property type="entry name" value="IRON-REGULATED SURFACE DETERMINANT PROTEIN C"/>
    <property type="match status" value="1"/>
</dbReference>
<dbReference type="PANTHER" id="PTHR37824:SF1">
    <property type="entry name" value="IRON-REGULATED SURFACE DETERMINANT PROTEIN C"/>
    <property type="match status" value="1"/>
</dbReference>
<dbReference type="Pfam" id="PF05031">
    <property type="entry name" value="NEAT"/>
    <property type="match status" value="1"/>
</dbReference>
<dbReference type="SMART" id="SM00725">
    <property type="entry name" value="NEAT"/>
    <property type="match status" value="1"/>
</dbReference>
<dbReference type="SUPFAM" id="SSF158911">
    <property type="entry name" value="NEAT domain-like"/>
    <property type="match status" value="1"/>
</dbReference>
<dbReference type="PROSITE" id="PS50978">
    <property type="entry name" value="NEAT"/>
    <property type="match status" value="1"/>
</dbReference>
<feature type="signal peptide" evidence="3">
    <location>
        <begin position="1"/>
        <end position="28"/>
    </location>
</feature>
<feature type="chain" id="PRO_5000256993" description="Iron-regulated surface determinant protein C">
    <location>
        <begin position="29"/>
        <end position="192"/>
    </location>
</feature>
<feature type="propeptide" id="PRO_0000333250" description="Removed by sortase B" evidence="2">
    <location>
        <begin position="193"/>
        <end position="227"/>
    </location>
</feature>
<feature type="domain" description="NEAT" evidence="4">
    <location>
        <begin position="29"/>
        <end position="150"/>
    </location>
</feature>
<feature type="region of interest" description="Disordered" evidence="5">
    <location>
        <begin position="149"/>
        <end position="191"/>
    </location>
</feature>
<feature type="short sequence motif" description="NPQTN sorting signal" evidence="2">
    <location>
        <begin position="189"/>
        <end position="193"/>
    </location>
</feature>
<feature type="compositionally biased region" description="Low complexity" evidence="5">
    <location>
        <begin position="161"/>
        <end position="175"/>
    </location>
</feature>
<feature type="binding site" evidence="2">
    <location>
        <position position="47"/>
    </location>
    <ligand>
        <name>heme</name>
        <dbReference type="ChEBI" id="CHEBI:30413"/>
    </ligand>
</feature>
<feature type="binding site" evidence="2">
    <location>
        <position position="48"/>
    </location>
    <ligand>
        <name>heme</name>
        <dbReference type="ChEBI" id="CHEBI:30413"/>
    </ligand>
</feature>
<feature type="binding site" description="axial binding residue" evidence="1">
    <location>
        <position position="132"/>
    </location>
    <ligand>
        <name>heme</name>
        <dbReference type="ChEBI" id="CHEBI:30413"/>
    </ligand>
    <ligandPart>
        <name>Fe</name>
        <dbReference type="ChEBI" id="CHEBI:18248"/>
    </ligandPart>
</feature>
<feature type="binding site" evidence="2">
    <location>
        <position position="136"/>
    </location>
    <ligand>
        <name>heme</name>
        <dbReference type="ChEBI" id="CHEBI:30413"/>
    </ligand>
</feature>
<feature type="modified residue" description="Pentaglycyl murein peptidoglycan amidated threonine" evidence="2">
    <location>
        <position position="192"/>
    </location>
</feature>
<comment type="function">
    <text evidence="1">Involved in heme (porphyrin) scavenging. Binds hemoglobin and almost exclusively free-base protoporphyrin IX. Probably has a role as the central conduit of the isd heme uptake system, i.e. mediates the transfer of the iron-containing nutrient from IsdABH to the membrane translocation system IsdDEF. Hemin-free IsdC (apo-IsdC) acquires hemin from hemin-containing IsdA (holo-IsdA) probably through the activated holo-IsdA-apo-IsdC complex and due to the higher affinity of apo-IsdC for the cofactor. The reaction is reversible (By similarity).</text>
</comment>
<comment type="subunit">
    <text evidence="1">Monomer. Interacts with IsdA (By similarity).</text>
</comment>
<comment type="subcellular location">
    <subcellularLocation>
        <location evidence="1">Secreted</location>
        <location evidence="1">Cell wall</location>
        <topology evidence="1">Peptidoglycan-anchor</topology>
    </subcellularLocation>
    <text evidence="2">Anchored to the cell wall by sortase B (By similarity).</text>
</comment>
<comment type="induction">
    <text evidence="1">Repressed by fur in the presence of iron.</text>
</comment>
<comment type="domain">
    <text evidence="1">The NEAT domain binds Fe(3+) heme iron. Reduction of the high-spin Fe(3+) heme iron to high-spin Fe(2+) results in loss of the heme from the binding site of the protein due to the absence of a proximal histidine (By similarity).</text>
</comment>
<comment type="similarity">
    <text evidence="6">Belongs to the IsdC family.</text>
</comment>
<accession>A6U0U8</accession>
<keyword id="KW-0134">Cell wall</keyword>
<keyword id="KW-0349">Heme</keyword>
<keyword id="KW-0408">Iron</keyword>
<keyword id="KW-0479">Metal-binding</keyword>
<keyword id="KW-0572">Peptidoglycan-anchor</keyword>
<keyword id="KW-0964">Secreted</keyword>
<keyword id="KW-0732">Signal</keyword>
<evidence type="ECO:0000250" key="1"/>
<evidence type="ECO:0000250" key="2">
    <source>
        <dbReference type="UniProtKB" id="Q8KQR1"/>
    </source>
</evidence>
<evidence type="ECO:0000255" key="3"/>
<evidence type="ECO:0000255" key="4">
    <source>
        <dbReference type="PROSITE-ProRule" id="PRU00337"/>
    </source>
</evidence>
<evidence type="ECO:0000256" key="5">
    <source>
        <dbReference type="SAM" id="MobiDB-lite"/>
    </source>
</evidence>
<evidence type="ECO:0000305" key="6"/>
<reference key="1">
    <citation type="submission" date="2007-06" db="EMBL/GenBank/DDBJ databases">
        <title>Complete sequence of chromosome of Staphylococcus aureus subsp. aureus JH1.</title>
        <authorList>
            <consortium name="US DOE Joint Genome Institute"/>
            <person name="Copeland A."/>
            <person name="Lucas S."/>
            <person name="Lapidus A."/>
            <person name="Barry K."/>
            <person name="Detter J.C."/>
            <person name="Glavina del Rio T."/>
            <person name="Hammon N."/>
            <person name="Israni S."/>
            <person name="Dalin E."/>
            <person name="Tice H."/>
            <person name="Pitluck S."/>
            <person name="Chain P."/>
            <person name="Malfatti S."/>
            <person name="Shin M."/>
            <person name="Vergez L."/>
            <person name="Schmutz J."/>
            <person name="Larimer F."/>
            <person name="Land M."/>
            <person name="Hauser L."/>
            <person name="Kyrpides N."/>
            <person name="Ivanova N."/>
            <person name="Tomasz A."/>
            <person name="Richardson P."/>
        </authorList>
    </citation>
    <scope>NUCLEOTIDE SEQUENCE [LARGE SCALE GENOMIC DNA]</scope>
    <source>
        <strain>JH1</strain>
    </source>
</reference>